<organism>
    <name type="scientific">Oryza sativa subsp. indica</name>
    <name type="common">Rice</name>
    <dbReference type="NCBI Taxonomy" id="39946"/>
    <lineage>
        <taxon>Eukaryota</taxon>
        <taxon>Viridiplantae</taxon>
        <taxon>Streptophyta</taxon>
        <taxon>Embryophyta</taxon>
        <taxon>Tracheophyta</taxon>
        <taxon>Spermatophyta</taxon>
        <taxon>Magnoliopsida</taxon>
        <taxon>Liliopsida</taxon>
        <taxon>Poales</taxon>
        <taxon>Poaceae</taxon>
        <taxon>BOP clade</taxon>
        <taxon>Oryzoideae</taxon>
        <taxon>Oryzeae</taxon>
        <taxon>Oryzinae</taxon>
        <taxon>Oryza</taxon>
        <taxon>Oryza sativa</taxon>
    </lineage>
</organism>
<reference key="1">
    <citation type="journal article" date="2005" name="PLoS Biol.">
        <title>The genomes of Oryza sativa: a history of duplications.</title>
        <authorList>
            <person name="Yu J."/>
            <person name="Wang J."/>
            <person name="Lin W."/>
            <person name="Li S."/>
            <person name="Li H."/>
            <person name="Zhou J."/>
            <person name="Ni P."/>
            <person name="Dong W."/>
            <person name="Hu S."/>
            <person name="Zeng C."/>
            <person name="Zhang J."/>
            <person name="Zhang Y."/>
            <person name="Li R."/>
            <person name="Xu Z."/>
            <person name="Li S."/>
            <person name="Li X."/>
            <person name="Zheng H."/>
            <person name="Cong L."/>
            <person name="Lin L."/>
            <person name="Yin J."/>
            <person name="Geng J."/>
            <person name="Li G."/>
            <person name="Shi J."/>
            <person name="Liu J."/>
            <person name="Lv H."/>
            <person name="Li J."/>
            <person name="Wang J."/>
            <person name="Deng Y."/>
            <person name="Ran L."/>
            <person name="Shi X."/>
            <person name="Wang X."/>
            <person name="Wu Q."/>
            <person name="Li C."/>
            <person name="Ren X."/>
            <person name="Wang J."/>
            <person name="Wang X."/>
            <person name="Li D."/>
            <person name="Liu D."/>
            <person name="Zhang X."/>
            <person name="Ji Z."/>
            <person name="Zhao W."/>
            <person name="Sun Y."/>
            <person name="Zhang Z."/>
            <person name="Bao J."/>
            <person name="Han Y."/>
            <person name="Dong L."/>
            <person name="Ji J."/>
            <person name="Chen P."/>
            <person name="Wu S."/>
            <person name="Liu J."/>
            <person name="Xiao Y."/>
            <person name="Bu D."/>
            <person name="Tan J."/>
            <person name="Yang L."/>
            <person name="Ye C."/>
            <person name="Zhang J."/>
            <person name="Xu J."/>
            <person name="Zhou Y."/>
            <person name="Yu Y."/>
            <person name="Zhang B."/>
            <person name="Zhuang S."/>
            <person name="Wei H."/>
            <person name="Liu B."/>
            <person name="Lei M."/>
            <person name="Yu H."/>
            <person name="Li Y."/>
            <person name="Xu H."/>
            <person name="Wei S."/>
            <person name="He X."/>
            <person name="Fang L."/>
            <person name="Zhang Z."/>
            <person name="Zhang Y."/>
            <person name="Huang X."/>
            <person name="Su Z."/>
            <person name="Tong W."/>
            <person name="Li J."/>
            <person name="Tong Z."/>
            <person name="Li S."/>
            <person name="Ye J."/>
            <person name="Wang L."/>
            <person name="Fang L."/>
            <person name="Lei T."/>
            <person name="Chen C.-S."/>
            <person name="Chen H.-C."/>
            <person name="Xu Z."/>
            <person name="Li H."/>
            <person name="Huang H."/>
            <person name="Zhang F."/>
            <person name="Xu H."/>
            <person name="Li N."/>
            <person name="Zhao C."/>
            <person name="Li S."/>
            <person name="Dong L."/>
            <person name="Huang Y."/>
            <person name="Li L."/>
            <person name="Xi Y."/>
            <person name="Qi Q."/>
            <person name="Li W."/>
            <person name="Zhang B."/>
            <person name="Hu W."/>
            <person name="Zhang Y."/>
            <person name="Tian X."/>
            <person name="Jiao Y."/>
            <person name="Liang X."/>
            <person name="Jin J."/>
            <person name="Gao L."/>
            <person name="Zheng W."/>
            <person name="Hao B."/>
            <person name="Liu S.-M."/>
            <person name="Wang W."/>
            <person name="Yuan L."/>
            <person name="Cao M."/>
            <person name="McDermott J."/>
            <person name="Samudrala R."/>
            <person name="Wang J."/>
            <person name="Wong G.K.-S."/>
            <person name="Yang H."/>
        </authorList>
    </citation>
    <scope>NUCLEOTIDE SEQUENCE [LARGE SCALE GENOMIC DNA]</scope>
    <source>
        <strain>cv. 93-11</strain>
    </source>
</reference>
<protein>
    <recommendedName>
        <fullName>SPX domain-containing protein 5</fullName>
    </recommendedName>
    <alternativeName>
        <fullName>Protein SPX DOMAIN GENE 5</fullName>
        <shortName>OsSPX5</shortName>
    </alternativeName>
</protein>
<name>SPX5_ORYSI</name>
<keyword id="KW-1185">Reference proteome</keyword>
<accession>A2XHU0</accession>
<sequence length="247" mass="27514">MKFGKRLKRQIEESLPEWRDHFLNYKELKRRLNAVSSPDPAAEARFLALLHAEVDKFNAFFLEQEEDFVIRQRELQERIQSSSSAAAEMEGRVRREVVDLHGEMVLLLNYSSINYTGLAKILKKYDKRTGGVLRLPVIAGVLRQPFYATDLLSSLVRDCEAIMDAVFPSLPSPSAAAAAAARAAAEQAIFRNTVAALLTMQEVRSGSSTYGHFSLPPMTPLPDSDWLIQSVQPPPPPPPSSPLIIPT</sequence>
<feature type="chain" id="PRO_0000398354" description="SPX domain-containing protein 5">
    <location>
        <begin position="1"/>
        <end position="247"/>
    </location>
</feature>
<feature type="domain" description="SPX" evidence="1">
    <location>
        <begin position="1"/>
        <end position="139"/>
    </location>
</feature>
<feature type="region of interest" description="Disordered" evidence="2">
    <location>
        <begin position="224"/>
        <end position="247"/>
    </location>
</feature>
<feature type="compositionally biased region" description="Pro residues" evidence="2">
    <location>
        <begin position="232"/>
        <end position="241"/>
    </location>
</feature>
<gene>
    <name type="primary">SPX5</name>
    <name type="ORF">OsI_11977</name>
</gene>
<proteinExistence type="predicted"/>
<evidence type="ECO:0000255" key="1">
    <source>
        <dbReference type="PROSITE-ProRule" id="PRU00714"/>
    </source>
</evidence>
<evidence type="ECO:0000256" key="2">
    <source>
        <dbReference type="SAM" id="MobiDB-lite"/>
    </source>
</evidence>
<dbReference type="EMBL" id="CM000128">
    <property type="protein sequence ID" value="EAY90400.1"/>
    <property type="molecule type" value="Genomic_DNA"/>
</dbReference>
<dbReference type="SMR" id="A2XHU0"/>
<dbReference type="STRING" id="39946.A2XHU0"/>
<dbReference type="EnsemblPlants" id="BGIOSGA012839-TA">
    <property type="protein sequence ID" value="BGIOSGA012839-PA"/>
    <property type="gene ID" value="BGIOSGA012839"/>
</dbReference>
<dbReference type="EnsemblPlants" id="OsGoSa_03g0021110.01">
    <property type="protein sequence ID" value="OsGoSa_03g0021110.01"/>
    <property type="gene ID" value="OsGoSa_03g0021110"/>
</dbReference>
<dbReference type="EnsemblPlants" id="OsIR64_03g0020740.01">
    <property type="protein sequence ID" value="OsIR64_03g0020740.01"/>
    <property type="gene ID" value="OsIR64_03g0020740"/>
</dbReference>
<dbReference type="EnsemblPlants" id="OsKYG_03g0021030.01">
    <property type="protein sequence ID" value="OsKYG_03g0021030.01"/>
    <property type="gene ID" value="OsKYG_03g0021030"/>
</dbReference>
<dbReference type="EnsemblPlants" id="OsLaMu_03g0020850.01">
    <property type="protein sequence ID" value="OsLaMu_03g0020850.01"/>
    <property type="gene ID" value="OsLaMu_03g0020850"/>
</dbReference>
<dbReference type="EnsemblPlants" id="OsLima_03g0021000.01">
    <property type="protein sequence ID" value="OsLima_03g0021000.01"/>
    <property type="gene ID" value="OsLima_03g0021000"/>
</dbReference>
<dbReference type="EnsemblPlants" id="OsLiXu_03g0020970.01">
    <property type="protein sequence ID" value="OsLiXu_03g0020970.01"/>
    <property type="gene ID" value="OsLiXu_03g0020970"/>
</dbReference>
<dbReference type="EnsemblPlants" id="OsZS97_03G020930_01">
    <property type="protein sequence ID" value="OsZS97_03G020930_01"/>
    <property type="gene ID" value="OsZS97_03G020930"/>
</dbReference>
<dbReference type="Gramene" id="BGIOSGA012839-TA">
    <property type="protein sequence ID" value="BGIOSGA012839-PA"/>
    <property type="gene ID" value="BGIOSGA012839"/>
</dbReference>
<dbReference type="Gramene" id="OsGoSa_03g0021110.01">
    <property type="protein sequence ID" value="OsGoSa_03g0021110.01"/>
    <property type="gene ID" value="OsGoSa_03g0021110"/>
</dbReference>
<dbReference type="Gramene" id="OsIR64_03g0020740.01">
    <property type="protein sequence ID" value="OsIR64_03g0020740.01"/>
    <property type="gene ID" value="OsIR64_03g0020740"/>
</dbReference>
<dbReference type="Gramene" id="OsKYG_03g0021030.01">
    <property type="protein sequence ID" value="OsKYG_03g0021030.01"/>
    <property type="gene ID" value="OsKYG_03g0021030"/>
</dbReference>
<dbReference type="Gramene" id="OsLaMu_03g0020850.01">
    <property type="protein sequence ID" value="OsLaMu_03g0020850.01"/>
    <property type="gene ID" value="OsLaMu_03g0020850"/>
</dbReference>
<dbReference type="Gramene" id="OsLima_03g0021000.01">
    <property type="protein sequence ID" value="OsLima_03g0021000.01"/>
    <property type="gene ID" value="OsLima_03g0021000"/>
</dbReference>
<dbReference type="Gramene" id="OsLiXu_03g0020970.01">
    <property type="protein sequence ID" value="OsLiXu_03g0020970.01"/>
    <property type="gene ID" value="OsLiXu_03g0020970"/>
</dbReference>
<dbReference type="Gramene" id="OsZS97_03G020930_01">
    <property type="protein sequence ID" value="OsZS97_03G020930_01"/>
    <property type="gene ID" value="OsZS97_03G020930"/>
</dbReference>
<dbReference type="HOGENOM" id="CLU_057600_1_0_1"/>
<dbReference type="OMA" id="CENTIDV"/>
<dbReference type="OrthoDB" id="6493944at2759"/>
<dbReference type="Proteomes" id="UP000007015">
    <property type="component" value="Chromosome 3"/>
</dbReference>
<dbReference type="GO" id="GO:0070417">
    <property type="term" value="P:cellular response to cold"/>
    <property type="evidence" value="ECO:0007669"/>
    <property type="project" value="EnsemblPlants"/>
</dbReference>
<dbReference type="GO" id="GO:0016036">
    <property type="term" value="P:cellular response to phosphate starvation"/>
    <property type="evidence" value="ECO:0007669"/>
    <property type="project" value="EnsemblPlants"/>
</dbReference>
<dbReference type="CDD" id="cd14481">
    <property type="entry name" value="SPX_AtSPX1_like"/>
    <property type="match status" value="1"/>
</dbReference>
<dbReference type="InterPro" id="IPR004331">
    <property type="entry name" value="SPX_dom"/>
</dbReference>
<dbReference type="InterPro" id="IPR031142">
    <property type="entry name" value="SPX_prot"/>
</dbReference>
<dbReference type="PANTHER" id="PTHR45978">
    <property type="entry name" value="SPX DOMAIN-CONTAINING PROTEIN 3"/>
    <property type="match status" value="1"/>
</dbReference>
<dbReference type="PANTHER" id="PTHR45978:SF9">
    <property type="entry name" value="SPX DOMAIN-CONTAINING PROTEIN 5"/>
    <property type="match status" value="1"/>
</dbReference>
<dbReference type="Pfam" id="PF03105">
    <property type="entry name" value="SPX"/>
    <property type="match status" value="2"/>
</dbReference>
<dbReference type="PROSITE" id="PS51382">
    <property type="entry name" value="SPX"/>
    <property type="match status" value="1"/>
</dbReference>